<protein>
    <recommendedName>
        <fullName evidence="2">Photosystem II extrinsic protein V</fullName>
        <shortName evidence="2">PsbV</shortName>
    </recommendedName>
    <alternativeName>
        <fullName evidence="2">Cytochrome c-550</fullName>
    </alternativeName>
    <alternativeName>
        <fullName evidence="2">Cytochrome c550</fullName>
    </alternativeName>
</protein>
<name>CY550_CYAM1</name>
<reference key="1">
    <citation type="journal article" date="2003" name="DNA Res.">
        <title>Complete sequence and analysis of the plastid genome of the unicellular red alga Cyanidioschyzon merolae.</title>
        <authorList>
            <person name="Ohta N."/>
            <person name="Matsuzaki M."/>
            <person name="Misumi O."/>
            <person name="Miyagishima S.-Y."/>
            <person name="Nozaki H."/>
            <person name="Tanaka K."/>
            <person name="Shin-i T."/>
            <person name="Kohara Y."/>
            <person name="Kuroiwa T."/>
        </authorList>
    </citation>
    <scope>NUCLEOTIDE SEQUENCE [LARGE SCALE GENOMIC DNA]</scope>
    <source>
        <strain>NIES-3377 / 10D</strain>
    </source>
</reference>
<accession>Q85FS3</accession>
<dbReference type="EMBL" id="AB002583">
    <property type="protein sequence ID" value="BAC76272.1"/>
    <property type="molecule type" value="Genomic_DNA"/>
</dbReference>
<dbReference type="RefSeq" id="NP_849110.1">
    <property type="nucleotide sequence ID" value="NC_004799.1"/>
</dbReference>
<dbReference type="SMR" id="Q85FS3"/>
<dbReference type="STRING" id="280699.Q85FS3"/>
<dbReference type="EnsemblPlants" id="CMV208CT">
    <property type="protein sequence ID" value="CMV208CT"/>
    <property type="gene ID" value="CMV208C"/>
</dbReference>
<dbReference type="GeneID" id="844959"/>
<dbReference type="Gramene" id="CMV208CT">
    <property type="protein sequence ID" value="CMV208CT"/>
    <property type="gene ID" value="CMV208C"/>
</dbReference>
<dbReference type="KEGG" id="cme:CymeCp178"/>
<dbReference type="eggNOG" id="ENOG502RYSJ">
    <property type="taxonomic scope" value="Eukaryota"/>
</dbReference>
<dbReference type="HOGENOM" id="CLU_104149_1_0_1"/>
<dbReference type="Proteomes" id="UP000007014">
    <property type="component" value="Chloroplast"/>
</dbReference>
<dbReference type="GO" id="GO:0009535">
    <property type="term" value="C:chloroplast thylakoid membrane"/>
    <property type="evidence" value="ECO:0007669"/>
    <property type="project" value="UniProtKB-SubCell"/>
</dbReference>
<dbReference type="GO" id="GO:0009523">
    <property type="term" value="C:photosystem II"/>
    <property type="evidence" value="ECO:0007669"/>
    <property type="project" value="UniProtKB-KW"/>
</dbReference>
<dbReference type="GO" id="GO:0009055">
    <property type="term" value="F:electron transfer activity"/>
    <property type="evidence" value="ECO:0007669"/>
    <property type="project" value="InterPro"/>
</dbReference>
<dbReference type="GO" id="GO:0020037">
    <property type="term" value="F:heme binding"/>
    <property type="evidence" value="ECO:0007669"/>
    <property type="project" value="InterPro"/>
</dbReference>
<dbReference type="GO" id="GO:0005506">
    <property type="term" value="F:iron ion binding"/>
    <property type="evidence" value="ECO:0007669"/>
    <property type="project" value="InterPro"/>
</dbReference>
<dbReference type="GO" id="GO:0019684">
    <property type="term" value="P:photosynthesis, light reaction"/>
    <property type="evidence" value="ECO:0007669"/>
    <property type="project" value="UniProtKB-UniRule"/>
</dbReference>
<dbReference type="GO" id="GO:0022904">
    <property type="term" value="P:respiratory electron transport chain"/>
    <property type="evidence" value="ECO:0007669"/>
    <property type="project" value="InterPro"/>
</dbReference>
<dbReference type="Gene3D" id="1.10.760.10">
    <property type="entry name" value="Cytochrome c-like domain"/>
    <property type="match status" value="1"/>
</dbReference>
<dbReference type="HAMAP" id="MF_01378">
    <property type="entry name" value="PSII_Cyt550"/>
    <property type="match status" value="1"/>
</dbReference>
<dbReference type="InterPro" id="IPR009056">
    <property type="entry name" value="Cyt_c-like_dom"/>
</dbReference>
<dbReference type="InterPro" id="IPR036909">
    <property type="entry name" value="Cyt_c-like_dom_sf"/>
</dbReference>
<dbReference type="InterPro" id="IPR029490">
    <property type="entry name" value="Cytochrom_C550"/>
</dbReference>
<dbReference type="InterPro" id="IPR017851">
    <property type="entry name" value="PsbV_cyt_c550"/>
</dbReference>
<dbReference type="InterPro" id="IPR016003">
    <property type="entry name" value="PsbV_cyt_c550-like"/>
</dbReference>
<dbReference type="NCBIfam" id="TIGR03045">
    <property type="entry name" value="PS_II_C550"/>
    <property type="match status" value="1"/>
</dbReference>
<dbReference type="Pfam" id="PF14495">
    <property type="entry name" value="Cytochrom_C550"/>
    <property type="match status" value="1"/>
</dbReference>
<dbReference type="PIRSF" id="PIRSF005890">
    <property type="entry name" value="Phot_II_cyt_c550"/>
    <property type="match status" value="1"/>
</dbReference>
<dbReference type="SUPFAM" id="SSF46626">
    <property type="entry name" value="Cytochrome c"/>
    <property type="match status" value="1"/>
</dbReference>
<dbReference type="PROSITE" id="PS51007">
    <property type="entry name" value="CYTC"/>
    <property type="match status" value="1"/>
</dbReference>
<sequence>MIRVIMLLVLVWMTPMISWATEVVKDVSGQKVEVNADQLKRGKRLFNTHCSACHVGGITKTNPNIGLDLESLSLATPARNNLDALVDYMKNPTTYDGSESIAQIHPSIASSDIFPKMRDLSEDDLYAIASHILTQAQIQAEKWGGGKIYY</sequence>
<comment type="function">
    <text evidence="2">One of the extrinsic, lumenal subunits of photosystem II (PSII). PSII is a light-driven water plastoquinone oxidoreductase, using light energy to abstract electrons from H(2)O, generating a proton gradient subsequently used for ATP formation. The extrinsic proteins stabilize the structure of photosystem II oxygen-evolving complex (OEC), the ion environment of oxygen evolution and protect the OEC against heat-induced inactivation.</text>
</comment>
<comment type="cofactor">
    <cofactor evidence="2">
        <name>heme c</name>
        <dbReference type="ChEBI" id="CHEBI:61717"/>
    </cofactor>
    <text evidence="2">Binds 1 heme c group covalently per subunit.</text>
</comment>
<comment type="subunit">
    <text evidence="1">PSII is composed of 1 copy each of membrane proteins PsbA, PsbB, PsbC, PsbD, PsbE, PsbF, PsbH, PsbI, PsbJ, PsbK, PsbL, PsbM, PsbT, PsbY, PsbZ, Psb30/Ycf12, at least 3 peripheral proteins of the oxygen-evolving complex and a large number of cofactors. It forms dimeric complexes. The extrinsic subunits in red algae are PsbO (OEC33), PsbQ', cytochrome c-550 and PsbU.</text>
</comment>
<comment type="subcellular location">
    <subcellularLocation>
        <location evidence="2">Plastid</location>
        <location evidence="2">Chloroplast thylakoid membrane</location>
        <topology evidence="2">Peripheral membrane protein</topology>
        <orientation evidence="2">Lumenal side</orientation>
    </subcellularLocation>
    <text evidence="2">Associated with photosystem II at the lumenal side of the thylakoid membrane.</text>
</comment>
<comment type="similarity">
    <text evidence="2">Belongs to the cytochrome c family. PsbV subfamily.</text>
</comment>
<gene>
    <name evidence="2" type="primary">psbV</name>
</gene>
<proteinExistence type="inferred from homology"/>
<evidence type="ECO:0000250" key="1">
    <source>
        <dbReference type="UniProtKB" id="Q76FB0"/>
    </source>
</evidence>
<evidence type="ECO:0000255" key="2">
    <source>
        <dbReference type="HAMAP-Rule" id="MF_01378"/>
    </source>
</evidence>
<keyword id="KW-0150">Chloroplast</keyword>
<keyword id="KW-0249">Electron transport</keyword>
<keyword id="KW-0349">Heme</keyword>
<keyword id="KW-0408">Iron</keyword>
<keyword id="KW-0472">Membrane</keyword>
<keyword id="KW-0479">Metal-binding</keyword>
<keyword id="KW-0602">Photosynthesis</keyword>
<keyword id="KW-0604">Photosystem II</keyword>
<keyword id="KW-0934">Plastid</keyword>
<keyword id="KW-1185">Reference proteome</keyword>
<keyword id="KW-0732">Signal</keyword>
<keyword id="KW-0793">Thylakoid</keyword>
<keyword id="KW-0813">Transport</keyword>
<organism>
    <name type="scientific">Cyanidioschyzon merolae (strain NIES-3377 / 10D)</name>
    <name type="common">Unicellular red alga</name>
    <dbReference type="NCBI Taxonomy" id="280699"/>
    <lineage>
        <taxon>Eukaryota</taxon>
        <taxon>Rhodophyta</taxon>
        <taxon>Bangiophyceae</taxon>
        <taxon>Cyanidiales</taxon>
        <taxon>Cyanidiaceae</taxon>
        <taxon>Cyanidioschyzon</taxon>
    </lineage>
</organism>
<geneLocation type="chloroplast"/>
<feature type="signal peptide" evidence="2">
    <location>
        <begin position="1"/>
        <end position="20"/>
    </location>
</feature>
<feature type="chain" id="PRO_0000295611" description="Photosystem II extrinsic protein V">
    <location>
        <begin position="21"/>
        <end position="150"/>
    </location>
</feature>
<feature type="binding site" description="covalent" evidence="2">
    <location>
        <position position="50"/>
    </location>
    <ligand>
        <name>heme c</name>
        <dbReference type="ChEBI" id="CHEBI:61717"/>
    </ligand>
</feature>
<feature type="binding site" description="covalent" evidence="2">
    <location>
        <position position="53"/>
    </location>
    <ligand>
        <name>heme c</name>
        <dbReference type="ChEBI" id="CHEBI:61717"/>
    </ligand>
</feature>
<feature type="binding site" description="axial binding residue" evidence="2">
    <location>
        <position position="54"/>
    </location>
    <ligand>
        <name>heme c</name>
        <dbReference type="ChEBI" id="CHEBI:61717"/>
    </ligand>
    <ligandPart>
        <name>Fe</name>
        <dbReference type="ChEBI" id="CHEBI:18248"/>
    </ligandPart>
</feature>
<feature type="binding site" description="axial binding residue" evidence="2">
    <location>
        <position position="105"/>
    </location>
    <ligand>
        <name>heme c</name>
        <dbReference type="ChEBI" id="CHEBI:61717"/>
    </ligand>
    <ligandPart>
        <name>Fe</name>
        <dbReference type="ChEBI" id="CHEBI:18248"/>
    </ligandPart>
</feature>